<proteinExistence type="inferred from homology"/>
<comment type="function">
    <text evidence="1">Catalyzes the condensation of pantoate with beta-alanine in an ATP-dependent reaction via a pantoyl-adenylate intermediate.</text>
</comment>
<comment type="catalytic activity">
    <reaction evidence="1">
        <text>(R)-pantoate + beta-alanine + ATP = (R)-pantothenate + AMP + diphosphate + H(+)</text>
        <dbReference type="Rhea" id="RHEA:10912"/>
        <dbReference type="ChEBI" id="CHEBI:15378"/>
        <dbReference type="ChEBI" id="CHEBI:15980"/>
        <dbReference type="ChEBI" id="CHEBI:29032"/>
        <dbReference type="ChEBI" id="CHEBI:30616"/>
        <dbReference type="ChEBI" id="CHEBI:33019"/>
        <dbReference type="ChEBI" id="CHEBI:57966"/>
        <dbReference type="ChEBI" id="CHEBI:456215"/>
        <dbReference type="EC" id="6.3.2.1"/>
    </reaction>
</comment>
<comment type="pathway">
    <text evidence="1">Cofactor biosynthesis; (R)-pantothenate biosynthesis; (R)-pantothenate from (R)-pantoate and beta-alanine: step 1/1.</text>
</comment>
<comment type="subunit">
    <text evidence="1">Homodimer.</text>
</comment>
<comment type="subcellular location">
    <subcellularLocation>
        <location evidence="1">Cytoplasm</location>
    </subcellularLocation>
</comment>
<comment type="miscellaneous">
    <text evidence="1">The reaction proceeds by a bi uni uni bi ping pong mechanism.</text>
</comment>
<comment type="similarity">
    <text evidence="1">Belongs to the pantothenate synthetase family.</text>
</comment>
<name>PANC_SALPK</name>
<sequence>MLIIETLPLLRQHIRRLRQEGKRVALVPTMGNLHDGHMKLVDEAKARADVVIVSIFVNPMQFDRPDDLVRYPRTLQEDCEKLNKRKVDYVFAPAVEEIYPQGLEGQTYVDVPGLSTMLEGASRPGHFRGVSTIVSKLFNLIQPDIACFGEKDFQQLALIRKMVADMSYDIEIVGVPIIRAKDGLALSSRNAYLTAEQRKIAPGLYNVMNSIAEKLIAGNRELQEIIAIAEQELNEKGFRADDIQIRDADTLLELTETSKRAVILAAAWLGQARLIDNQSVTLAQ</sequence>
<dbReference type="EC" id="6.3.2.1" evidence="1"/>
<dbReference type="EMBL" id="FM200053">
    <property type="protein sequence ID" value="CAR58294.1"/>
    <property type="molecule type" value="Genomic_DNA"/>
</dbReference>
<dbReference type="RefSeq" id="WP_000905347.1">
    <property type="nucleotide sequence ID" value="NC_011147.1"/>
</dbReference>
<dbReference type="SMR" id="B5BL64"/>
<dbReference type="KEGG" id="sek:SSPA0183"/>
<dbReference type="HOGENOM" id="CLU_047148_0_0_6"/>
<dbReference type="UniPathway" id="UPA00028">
    <property type="reaction ID" value="UER00005"/>
</dbReference>
<dbReference type="Proteomes" id="UP000001869">
    <property type="component" value="Chromosome"/>
</dbReference>
<dbReference type="GO" id="GO:0005829">
    <property type="term" value="C:cytosol"/>
    <property type="evidence" value="ECO:0007669"/>
    <property type="project" value="TreeGrafter"/>
</dbReference>
<dbReference type="GO" id="GO:0005524">
    <property type="term" value="F:ATP binding"/>
    <property type="evidence" value="ECO:0007669"/>
    <property type="project" value="UniProtKB-KW"/>
</dbReference>
<dbReference type="GO" id="GO:0004592">
    <property type="term" value="F:pantoate-beta-alanine ligase activity"/>
    <property type="evidence" value="ECO:0007669"/>
    <property type="project" value="UniProtKB-UniRule"/>
</dbReference>
<dbReference type="GO" id="GO:0015940">
    <property type="term" value="P:pantothenate biosynthetic process"/>
    <property type="evidence" value="ECO:0007669"/>
    <property type="project" value="UniProtKB-UniRule"/>
</dbReference>
<dbReference type="CDD" id="cd00560">
    <property type="entry name" value="PanC"/>
    <property type="match status" value="1"/>
</dbReference>
<dbReference type="FunFam" id="3.30.1300.10:FF:000001">
    <property type="entry name" value="Pantothenate synthetase"/>
    <property type="match status" value="1"/>
</dbReference>
<dbReference type="FunFam" id="3.40.50.620:FF:000013">
    <property type="entry name" value="Pantothenate synthetase"/>
    <property type="match status" value="1"/>
</dbReference>
<dbReference type="Gene3D" id="3.40.50.620">
    <property type="entry name" value="HUPs"/>
    <property type="match status" value="1"/>
</dbReference>
<dbReference type="Gene3D" id="3.30.1300.10">
    <property type="entry name" value="Pantoate-beta-alanine ligase, C-terminal domain"/>
    <property type="match status" value="1"/>
</dbReference>
<dbReference type="HAMAP" id="MF_00158">
    <property type="entry name" value="PanC"/>
    <property type="match status" value="1"/>
</dbReference>
<dbReference type="InterPro" id="IPR004821">
    <property type="entry name" value="Cyt_trans-like"/>
</dbReference>
<dbReference type="InterPro" id="IPR003721">
    <property type="entry name" value="Pantoate_ligase"/>
</dbReference>
<dbReference type="InterPro" id="IPR042176">
    <property type="entry name" value="Pantoate_ligase_C"/>
</dbReference>
<dbReference type="InterPro" id="IPR014729">
    <property type="entry name" value="Rossmann-like_a/b/a_fold"/>
</dbReference>
<dbReference type="NCBIfam" id="TIGR00125">
    <property type="entry name" value="cyt_tran_rel"/>
    <property type="match status" value="1"/>
</dbReference>
<dbReference type="NCBIfam" id="TIGR00018">
    <property type="entry name" value="panC"/>
    <property type="match status" value="1"/>
</dbReference>
<dbReference type="PANTHER" id="PTHR21299">
    <property type="entry name" value="CYTIDYLATE KINASE/PANTOATE-BETA-ALANINE LIGASE"/>
    <property type="match status" value="1"/>
</dbReference>
<dbReference type="PANTHER" id="PTHR21299:SF1">
    <property type="entry name" value="PANTOATE--BETA-ALANINE LIGASE"/>
    <property type="match status" value="1"/>
</dbReference>
<dbReference type="Pfam" id="PF02569">
    <property type="entry name" value="Pantoate_ligase"/>
    <property type="match status" value="1"/>
</dbReference>
<dbReference type="SUPFAM" id="SSF52374">
    <property type="entry name" value="Nucleotidylyl transferase"/>
    <property type="match status" value="1"/>
</dbReference>
<reference key="1">
    <citation type="journal article" date="2009" name="BMC Genomics">
        <title>Pseudogene accumulation in the evolutionary histories of Salmonella enterica serovars Paratyphi A and Typhi.</title>
        <authorList>
            <person name="Holt K.E."/>
            <person name="Thomson N.R."/>
            <person name="Wain J."/>
            <person name="Langridge G.C."/>
            <person name="Hasan R."/>
            <person name="Bhutta Z.A."/>
            <person name="Quail M.A."/>
            <person name="Norbertczak H."/>
            <person name="Walker D."/>
            <person name="Simmonds M."/>
            <person name="White B."/>
            <person name="Bason N."/>
            <person name="Mungall K."/>
            <person name="Dougan G."/>
            <person name="Parkhill J."/>
        </authorList>
    </citation>
    <scope>NUCLEOTIDE SEQUENCE [LARGE SCALE GENOMIC DNA]</scope>
    <source>
        <strain>AKU_12601</strain>
    </source>
</reference>
<accession>B5BL64</accession>
<feature type="chain" id="PRO_1000097105" description="Pantothenate synthetase">
    <location>
        <begin position="1"/>
        <end position="284"/>
    </location>
</feature>
<feature type="active site" description="Proton donor" evidence="1">
    <location>
        <position position="37"/>
    </location>
</feature>
<feature type="binding site" evidence="1">
    <location>
        <begin position="30"/>
        <end position="37"/>
    </location>
    <ligand>
        <name>ATP</name>
        <dbReference type="ChEBI" id="CHEBI:30616"/>
    </ligand>
</feature>
<feature type="binding site" evidence="1">
    <location>
        <position position="61"/>
    </location>
    <ligand>
        <name>(R)-pantoate</name>
        <dbReference type="ChEBI" id="CHEBI:15980"/>
    </ligand>
</feature>
<feature type="binding site" evidence="1">
    <location>
        <position position="61"/>
    </location>
    <ligand>
        <name>beta-alanine</name>
        <dbReference type="ChEBI" id="CHEBI:57966"/>
    </ligand>
</feature>
<feature type="binding site" evidence="1">
    <location>
        <begin position="149"/>
        <end position="152"/>
    </location>
    <ligand>
        <name>ATP</name>
        <dbReference type="ChEBI" id="CHEBI:30616"/>
    </ligand>
</feature>
<feature type="binding site" evidence="1">
    <location>
        <position position="155"/>
    </location>
    <ligand>
        <name>(R)-pantoate</name>
        <dbReference type="ChEBI" id="CHEBI:15980"/>
    </ligand>
</feature>
<feature type="binding site" evidence="1">
    <location>
        <position position="178"/>
    </location>
    <ligand>
        <name>ATP</name>
        <dbReference type="ChEBI" id="CHEBI:30616"/>
    </ligand>
</feature>
<feature type="binding site" evidence="1">
    <location>
        <begin position="186"/>
        <end position="189"/>
    </location>
    <ligand>
        <name>ATP</name>
        <dbReference type="ChEBI" id="CHEBI:30616"/>
    </ligand>
</feature>
<organism>
    <name type="scientific">Salmonella paratyphi A (strain AKU_12601)</name>
    <dbReference type="NCBI Taxonomy" id="554290"/>
    <lineage>
        <taxon>Bacteria</taxon>
        <taxon>Pseudomonadati</taxon>
        <taxon>Pseudomonadota</taxon>
        <taxon>Gammaproteobacteria</taxon>
        <taxon>Enterobacterales</taxon>
        <taxon>Enterobacteriaceae</taxon>
        <taxon>Salmonella</taxon>
    </lineage>
</organism>
<evidence type="ECO:0000255" key="1">
    <source>
        <dbReference type="HAMAP-Rule" id="MF_00158"/>
    </source>
</evidence>
<protein>
    <recommendedName>
        <fullName evidence="1">Pantothenate synthetase</fullName>
        <shortName evidence="1">PS</shortName>
        <ecNumber evidence="1">6.3.2.1</ecNumber>
    </recommendedName>
    <alternativeName>
        <fullName evidence="1">Pantoate--beta-alanine ligase</fullName>
    </alternativeName>
    <alternativeName>
        <fullName evidence="1">Pantoate-activating enzyme</fullName>
    </alternativeName>
</protein>
<gene>
    <name evidence="1" type="primary">panC</name>
    <name type="ordered locus">SSPA0183</name>
</gene>
<keyword id="KW-0067">ATP-binding</keyword>
<keyword id="KW-0963">Cytoplasm</keyword>
<keyword id="KW-0436">Ligase</keyword>
<keyword id="KW-0547">Nucleotide-binding</keyword>
<keyword id="KW-0566">Pantothenate biosynthesis</keyword>